<keyword id="KW-0963">Cytoplasm</keyword>
<keyword id="KW-0227">DNA damage</keyword>
<keyword id="KW-0234">DNA repair</keyword>
<keyword id="KW-0235">DNA replication</keyword>
<keyword id="KW-0238">DNA-binding</keyword>
<keyword id="KW-0239">DNA-directed DNA polymerase</keyword>
<keyword id="KW-0460">Magnesium</keyword>
<keyword id="KW-0479">Metal-binding</keyword>
<keyword id="KW-0515">Mutator protein</keyword>
<keyword id="KW-0548">Nucleotidyltransferase</keyword>
<keyword id="KW-0808">Transferase</keyword>
<comment type="function">
    <text evidence="1">Poorly processive, error-prone DNA polymerase involved in untargeted mutagenesis. Copies undamaged DNA at stalled replication forks, which arise in vivo from mismatched or misaligned primer ends. These misaligned primers can be extended by PolIV. Exhibits no 3'-5' exonuclease (proofreading) activity. May be involved in translesional synthesis, in conjunction with the beta clamp from PolIII.</text>
</comment>
<comment type="catalytic activity">
    <reaction evidence="1">
        <text>DNA(n) + a 2'-deoxyribonucleoside 5'-triphosphate = DNA(n+1) + diphosphate</text>
        <dbReference type="Rhea" id="RHEA:22508"/>
        <dbReference type="Rhea" id="RHEA-COMP:17339"/>
        <dbReference type="Rhea" id="RHEA-COMP:17340"/>
        <dbReference type="ChEBI" id="CHEBI:33019"/>
        <dbReference type="ChEBI" id="CHEBI:61560"/>
        <dbReference type="ChEBI" id="CHEBI:173112"/>
        <dbReference type="EC" id="2.7.7.7"/>
    </reaction>
</comment>
<comment type="cofactor">
    <cofactor evidence="1">
        <name>Mg(2+)</name>
        <dbReference type="ChEBI" id="CHEBI:18420"/>
    </cofactor>
    <text evidence="1">Binds 2 magnesium ions per subunit.</text>
</comment>
<comment type="subunit">
    <text evidence="1">Monomer.</text>
</comment>
<comment type="subcellular location">
    <subcellularLocation>
        <location evidence="1">Cytoplasm</location>
    </subcellularLocation>
</comment>
<comment type="similarity">
    <text evidence="1">Belongs to the DNA polymerase type-Y family.</text>
</comment>
<dbReference type="EC" id="2.7.7.7" evidence="1"/>
<dbReference type="EMBL" id="CP000712">
    <property type="protein sequence ID" value="ABQ77393.1"/>
    <property type="molecule type" value="Genomic_DNA"/>
</dbReference>
<dbReference type="SMR" id="A5VZT3"/>
<dbReference type="KEGG" id="ppf:Pput_1232"/>
<dbReference type="eggNOG" id="COG0389">
    <property type="taxonomic scope" value="Bacteria"/>
</dbReference>
<dbReference type="HOGENOM" id="CLU_012348_1_2_6"/>
<dbReference type="GO" id="GO:0005829">
    <property type="term" value="C:cytosol"/>
    <property type="evidence" value="ECO:0007669"/>
    <property type="project" value="TreeGrafter"/>
</dbReference>
<dbReference type="GO" id="GO:0003684">
    <property type="term" value="F:damaged DNA binding"/>
    <property type="evidence" value="ECO:0007669"/>
    <property type="project" value="InterPro"/>
</dbReference>
<dbReference type="GO" id="GO:0003887">
    <property type="term" value="F:DNA-directed DNA polymerase activity"/>
    <property type="evidence" value="ECO:0007669"/>
    <property type="project" value="UniProtKB-UniRule"/>
</dbReference>
<dbReference type="GO" id="GO:0000287">
    <property type="term" value="F:magnesium ion binding"/>
    <property type="evidence" value="ECO:0007669"/>
    <property type="project" value="UniProtKB-UniRule"/>
</dbReference>
<dbReference type="GO" id="GO:0006261">
    <property type="term" value="P:DNA-templated DNA replication"/>
    <property type="evidence" value="ECO:0007669"/>
    <property type="project" value="UniProtKB-UniRule"/>
</dbReference>
<dbReference type="GO" id="GO:0042276">
    <property type="term" value="P:error-prone translesion synthesis"/>
    <property type="evidence" value="ECO:0007669"/>
    <property type="project" value="TreeGrafter"/>
</dbReference>
<dbReference type="GO" id="GO:0009432">
    <property type="term" value="P:SOS response"/>
    <property type="evidence" value="ECO:0007669"/>
    <property type="project" value="TreeGrafter"/>
</dbReference>
<dbReference type="CDD" id="cd03586">
    <property type="entry name" value="PolY_Pol_IV_kappa"/>
    <property type="match status" value="1"/>
</dbReference>
<dbReference type="FunFam" id="1.10.150.20:FF:000019">
    <property type="entry name" value="DNA polymerase IV"/>
    <property type="match status" value="1"/>
</dbReference>
<dbReference type="FunFam" id="3.30.70.270:FF:000002">
    <property type="entry name" value="DNA polymerase IV"/>
    <property type="match status" value="1"/>
</dbReference>
<dbReference type="FunFam" id="3.40.1170.60:FF:000001">
    <property type="entry name" value="DNA polymerase IV"/>
    <property type="match status" value="1"/>
</dbReference>
<dbReference type="Gene3D" id="3.30.70.270">
    <property type="match status" value="1"/>
</dbReference>
<dbReference type="Gene3D" id="3.40.1170.60">
    <property type="match status" value="1"/>
</dbReference>
<dbReference type="Gene3D" id="1.10.150.20">
    <property type="entry name" value="5' to 3' exonuclease, C-terminal subdomain"/>
    <property type="match status" value="1"/>
</dbReference>
<dbReference type="Gene3D" id="3.30.1490.100">
    <property type="entry name" value="DNA polymerase, Y-family, little finger domain"/>
    <property type="match status" value="1"/>
</dbReference>
<dbReference type="HAMAP" id="MF_01113">
    <property type="entry name" value="DNApol_IV"/>
    <property type="match status" value="1"/>
</dbReference>
<dbReference type="InterPro" id="IPR043502">
    <property type="entry name" value="DNA/RNA_pol_sf"/>
</dbReference>
<dbReference type="InterPro" id="IPR036775">
    <property type="entry name" value="DNA_pol_Y-fam_lit_finger_sf"/>
</dbReference>
<dbReference type="InterPro" id="IPR017961">
    <property type="entry name" value="DNA_pol_Y-fam_little_finger"/>
</dbReference>
<dbReference type="InterPro" id="IPR050116">
    <property type="entry name" value="DNA_polymerase-Y"/>
</dbReference>
<dbReference type="InterPro" id="IPR022880">
    <property type="entry name" value="DNApol_IV"/>
</dbReference>
<dbReference type="InterPro" id="IPR053848">
    <property type="entry name" value="IMS_HHH_1"/>
</dbReference>
<dbReference type="InterPro" id="IPR043128">
    <property type="entry name" value="Rev_trsase/Diguanyl_cyclase"/>
</dbReference>
<dbReference type="InterPro" id="IPR001126">
    <property type="entry name" value="UmuC"/>
</dbReference>
<dbReference type="NCBIfam" id="NF002677">
    <property type="entry name" value="PRK02406.1"/>
    <property type="match status" value="1"/>
</dbReference>
<dbReference type="PANTHER" id="PTHR11076:SF33">
    <property type="entry name" value="DNA POLYMERASE KAPPA"/>
    <property type="match status" value="1"/>
</dbReference>
<dbReference type="PANTHER" id="PTHR11076">
    <property type="entry name" value="DNA REPAIR POLYMERASE UMUC / TRANSFERASE FAMILY MEMBER"/>
    <property type="match status" value="1"/>
</dbReference>
<dbReference type="Pfam" id="PF00817">
    <property type="entry name" value="IMS"/>
    <property type="match status" value="1"/>
</dbReference>
<dbReference type="Pfam" id="PF11799">
    <property type="entry name" value="IMS_C"/>
    <property type="match status" value="1"/>
</dbReference>
<dbReference type="Pfam" id="PF21999">
    <property type="entry name" value="IMS_HHH_1"/>
    <property type="match status" value="1"/>
</dbReference>
<dbReference type="SUPFAM" id="SSF56672">
    <property type="entry name" value="DNA/RNA polymerases"/>
    <property type="match status" value="1"/>
</dbReference>
<dbReference type="SUPFAM" id="SSF100879">
    <property type="entry name" value="Lesion bypass DNA polymerase (Y-family), little finger domain"/>
    <property type="match status" value="1"/>
</dbReference>
<dbReference type="PROSITE" id="PS50173">
    <property type="entry name" value="UMUC"/>
    <property type="match status" value="1"/>
</dbReference>
<organism>
    <name type="scientific">Pseudomonas putida (strain ATCC 700007 / DSM 6899 / JCM 31910 / BCRC 17059 / LMG 24140 / F1)</name>
    <dbReference type="NCBI Taxonomy" id="351746"/>
    <lineage>
        <taxon>Bacteria</taxon>
        <taxon>Pseudomonadati</taxon>
        <taxon>Pseudomonadota</taxon>
        <taxon>Gammaproteobacteria</taxon>
        <taxon>Pseudomonadales</taxon>
        <taxon>Pseudomonadaceae</taxon>
        <taxon>Pseudomonas</taxon>
    </lineage>
</organism>
<proteinExistence type="inferred from homology"/>
<evidence type="ECO:0000255" key="1">
    <source>
        <dbReference type="HAMAP-Rule" id="MF_01113"/>
    </source>
</evidence>
<name>DPO4_PSEP1</name>
<protein>
    <recommendedName>
        <fullName evidence="1">DNA polymerase IV</fullName>
        <shortName evidence="1">Pol IV</shortName>
        <ecNumber evidence="1">2.7.7.7</ecNumber>
    </recommendedName>
</protein>
<accession>A5VZT3</accession>
<sequence length="354" mass="39759">MSLRKIIHVDCDCFYAAIEMRDDPRLAGRPMAVGGSPDHRGVIATCNYEARAYGVRSAMSSRHALKLCPDLLIVKPRFEAYREASREIHTIFRDYTELIEPLSLDEAYLDVSDSQWYSGSATRIAEDIRRRVARTLHITVSAGVAPNKFLAKIASDWRKPNGLFVITPNEVETFVAALPVARLHGVGKVTADKLTRLGIETCLHLREWSRLALVREFGSFGERLWGLARGIDERAVHNDSRRQSVSVENTYDTDLPDLASCLARLPDLLASLNERIARMDSSYLPDKPFVKVKFHDFSQTTMEQAGAGRDLESYRQLLGQAFARGGKPVRLLGVGVRLRDLRGAHEQLELFPPK</sequence>
<reference key="1">
    <citation type="submission" date="2007-05" db="EMBL/GenBank/DDBJ databases">
        <title>Complete sequence of Pseudomonas putida F1.</title>
        <authorList>
            <consortium name="US DOE Joint Genome Institute"/>
            <person name="Copeland A."/>
            <person name="Lucas S."/>
            <person name="Lapidus A."/>
            <person name="Barry K."/>
            <person name="Detter J.C."/>
            <person name="Glavina del Rio T."/>
            <person name="Hammon N."/>
            <person name="Israni S."/>
            <person name="Dalin E."/>
            <person name="Tice H."/>
            <person name="Pitluck S."/>
            <person name="Chain P."/>
            <person name="Malfatti S."/>
            <person name="Shin M."/>
            <person name="Vergez L."/>
            <person name="Schmutz J."/>
            <person name="Larimer F."/>
            <person name="Land M."/>
            <person name="Hauser L."/>
            <person name="Kyrpides N."/>
            <person name="Lykidis A."/>
            <person name="Parales R."/>
            <person name="Richardson P."/>
        </authorList>
    </citation>
    <scope>NUCLEOTIDE SEQUENCE [LARGE SCALE GENOMIC DNA]</scope>
    <source>
        <strain>ATCC 700007 / DSM 6899 / JCM 31910 / BCRC 17059 / LMG 24140 / F1</strain>
    </source>
</reference>
<gene>
    <name evidence="1" type="primary">dinB</name>
    <name type="ordered locus">Pput_1232</name>
</gene>
<feature type="chain" id="PRO_1000084916" description="DNA polymerase IV">
    <location>
        <begin position="1"/>
        <end position="354"/>
    </location>
</feature>
<feature type="domain" description="UmuC" evidence="1">
    <location>
        <begin position="6"/>
        <end position="187"/>
    </location>
</feature>
<feature type="active site" evidence="1">
    <location>
        <position position="106"/>
    </location>
</feature>
<feature type="binding site" evidence="1">
    <location>
        <position position="10"/>
    </location>
    <ligand>
        <name>Mg(2+)</name>
        <dbReference type="ChEBI" id="CHEBI:18420"/>
    </ligand>
</feature>
<feature type="binding site" evidence="1">
    <location>
        <position position="105"/>
    </location>
    <ligand>
        <name>Mg(2+)</name>
        <dbReference type="ChEBI" id="CHEBI:18420"/>
    </ligand>
</feature>
<feature type="site" description="Substrate discrimination" evidence="1">
    <location>
        <position position="15"/>
    </location>
</feature>